<organism>
    <name type="scientific">Campylobacter concisus (strain 13826)</name>
    <dbReference type="NCBI Taxonomy" id="360104"/>
    <lineage>
        <taxon>Bacteria</taxon>
        <taxon>Pseudomonadati</taxon>
        <taxon>Campylobacterota</taxon>
        <taxon>Epsilonproteobacteria</taxon>
        <taxon>Campylobacterales</taxon>
        <taxon>Campylobacteraceae</taxon>
        <taxon>Campylobacter</taxon>
    </lineage>
</organism>
<feature type="chain" id="PRO_1000002736" description="Crossover junction endodeoxyribonuclease RuvC">
    <location>
        <begin position="1"/>
        <end position="157"/>
    </location>
</feature>
<feature type="active site" evidence="1">
    <location>
        <position position="7"/>
    </location>
</feature>
<feature type="active site" evidence="1">
    <location>
        <position position="66"/>
    </location>
</feature>
<feature type="active site" evidence="1">
    <location>
        <position position="139"/>
    </location>
</feature>
<feature type="binding site" evidence="1">
    <location>
        <position position="7"/>
    </location>
    <ligand>
        <name>Mg(2+)</name>
        <dbReference type="ChEBI" id="CHEBI:18420"/>
        <label>1</label>
    </ligand>
</feature>
<feature type="binding site" evidence="1">
    <location>
        <position position="66"/>
    </location>
    <ligand>
        <name>Mg(2+)</name>
        <dbReference type="ChEBI" id="CHEBI:18420"/>
        <label>2</label>
    </ligand>
</feature>
<feature type="binding site" evidence="1">
    <location>
        <position position="139"/>
    </location>
    <ligand>
        <name>Mg(2+)</name>
        <dbReference type="ChEBI" id="CHEBI:18420"/>
        <label>1</label>
    </ligand>
</feature>
<gene>
    <name evidence="1" type="primary">ruvC</name>
    <name type="ordered locus">Ccon26_20240</name>
    <name type="ORF">CCC13826_1854</name>
</gene>
<name>RUVC_CAMC1</name>
<protein>
    <recommendedName>
        <fullName evidence="1">Crossover junction endodeoxyribonuclease RuvC</fullName>
        <ecNumber evidence="1">3.1.21.10</ecNumber>
    </recommendedName>
    <alternativeName>
        <fullName evidence="1">Holliday junction nuclease RuvC</fullName>
    </alternativeName>
    <alternativeName>
        <fullName evidence="1">Holliday junction resolvase RuvC</fullName>
    </alternativeName>
</protein>
<comment type="function">
    <text evidence="1">The RuvA-RuvB-RuvC complex processes Holliday junction (HJ) DNA during genetic recombination and DNA repair. Endonuclease that resolves HJ intermediates. Cleaves cruciform DNA by making single-stranded nicks across the HJ at symmetrical positions within the homologous arms, yielding a 5'-phosphate and a 3'-hydroxyl group; requires a central core of homology in the junction. The consensus cleavage sequence is 5'-(A/T)TT(C/G)-3'. Cleavage occurs on the 3'-side of the TT dinucleotide at the point of strand exchange. HJ branch migration catalyzed by RuvA-RuvB allows RuvC to scan DNA until it finds its consensus sequence, where it cleaves and resolves the cruciform DNA.</text>
</comment>
<comment type="catalytic activity">
    <reaction evidence="1">
        <text>Endonucleolytic cleavage at a junction such as a reciprocal single-stranded crossover between two homologous DNA duplexes (Holliday junction).</text>
        <dbReference type="EC" id="3.1.21.10"/>
    </reaction>
</comment>
<comment type="cofactor">
    <cofactor evidence="1">
        <name>Mg(2+)</name>
        <dbReference type="ChEBI" id="CHEBI:18420"/>
    </cofactor>
    <text evidence="1">Binds 2 Mg(2+) ion per subunit.</text>
</comment>
<comment type="subunit">
    <text evidence="1">Homodimer which binds Holliday junction (HJ) DNA. The HJ becomes 2-fold symmetrical on binding to RuvC with unstacked arms; it has a different conformation from HJ DNA in complex with RuvA. In the full resolvosome a probable DNA-RuvA(4)-RuvB(12)-RuvC(2) complex forms which resolves the HJ.</text>
</comment>
<comment type="subcellular location">
    <subcellularLocation>
        <location evidence="1">Cytoplasm</location>
    </subcellularLocation>
</comment>
<comment type="similarity">
    <text evidence="1">Belongs to the RuvC family.</text>
</comment>
<reference key="1">
    <citation type="submission" date="2007-10" db="EMBL/GenBank/DDBJ databases">
        <title>Genome sequence of Campylobacter concisus 13826 isolated from human feces.</title>
        <authorList>
            <person name="Fouts D.E."/>
            <person name="Mongodin E.F."/>
            <person name="Puiu D."/>
            <person name="Sebastian Y."/>
            <person name="Miller W.G."/>
            <person name="Mandrell R.E."/>
            <person name="On S."/>
            <person name="Nelson K.E."/>
        </authorList>
    </citation>
    <scope>NUCLEOTIDE SEQUENCE [LARGE SCALE GENOMIC DNA]</scope>
    <source>
        <strain>13826</strain>
    </source>
</reference>
<proteinExistence type="inferred from homology"/>
<sequence>MKILGIDPGTKNCGYAILEKSKFKTILLEAGLIKIKPNTLQYQITELCEGLDLIFKNHKFDEVAIEDIFFAYNPKTVLKLAQFRGALSLKILQLHGDFAEYTPLQVKKTVTGKAKADKEQVAFMVKKILGINKEIKPLDITDAIAIALTHANNLRIN</sequence>
<evidence type="ECO:0000255" key="1">
    <source>
        <dbReference type="HAMAP-Rule" id="MF_00034"/>
    </source>
</evidence>
<keyword id="KW-0963">Cytoplasm</keyword>
<keyword id="KW-0227">DNA damage</keyword>
<keyword id="KW-0233">DNA recombination</keyword>
<keyword id="KW-0234">DNA repair</keyword>
<keyword id="KW-0238">DNA-binding</keyword>
<keyword id="KW-0255">Endonuclease</keyword>
<keyword id="KW-0378">Hydrolase</keyword>
<keyword id="KW-0460">Magnesium</keyword>
<keyword id="KW-0479">Metal-binding</keyword>
<keyword id="KW-0540">Nuclease</keyword>
<dbReference type="EC" id="3.1.21.10" evidence="1"/>
<dbReference type="EMBL" id="CP000792">
    <property type="protein sequence ID" value="EAT99112.1"/>
    <property type="molecule type" value="Genomic_DNA"/>
</dbReference>
<dbReference type="SMR" id="A7ZGE5"/>
<dbReference type="STRING" id="360104.CCC13826_1854"/>
<dbReference type="KEGG" id="cco:CCC13826_1854"/>
<dbReference type="eggNOG" id="COG0817">
    <property type="taxonomic scope" value="Bacteria"/>
</dbReference>
<dbReference type="HOGENOM" id="CLU_091257_3_0_7"/>
<dbReference type="Proteomes" id="UP000001121">
    <property type="component" value="Chromosome"/>
</dbReference>
<dbReference type="GO" id="GO:0005737">
    <property type="term" value="C:cytoplasm"/>
    <property type="evidence" value="ECO:0007669"/>
    <property type="project" value="UniProtKB-SubCell"/>
</dbReference>
<dbReference type="GO" id="GO:0048476">
    <property type="term" value="C:Holliday junction resolvase complex"/>
    <property type="evidence" value="ECO:0007669"/>
    <property type="project" value="UniProtKB-UniRule"/>
</dbReference>
<dbReference type="GO" id="GO:0008821">
    <property type="term" value="F:crossover junction DNA endonuclease activity"/>
    <property type="evidence" value="ECO:0007669"/>
    <property type="project" value="UniProtKB-UniRule"/>
</dbReference>
<dbReference type="GO" id="GO:0003677">
    <property type="term" value="F:DNA binding"/>
    <property type="evidence" value="ECO:0007669"/>
    <property type="project" value="UniProtKB-KW"/>
</dbReference>
<dbReference type="GO" id="GO:0000287">
    <property type="term" value="F:magnesium ion binding"/>
    <property type="evidence" value="ECO:0007669"/>
    <property type="project" value="UniProtKB-UniRule"/>
</dbReference>
<dbReference type="GO" id="GO:0006310">
    <property type="term" value="P:DNA recombination"/>
    <property type="evidence" value="ECO:0007669"/>
    <property type="project" value="UniProtKB-UniRule"/>
</dbReference>
<dbReference type="GO" id="GO:0006281">
    <property type="term" value="P:DNA repair"/>
    <property type="evidence" value="ECO:0007669"/>
    <property type="project" value="UniProtKB-UniRule"/>
</dbReference>
<dbReference type="CDD" id="cd16962">
    <property type="entry name" value="RuvC"/>
    <property type="match status" value="1"/>
</dbReference>
<dbReference type="FunFam" id="3.30.420.10:FF:000002">
    <property type="entry name" value="Crossover junction endodeoxyribonuclease RuvC"/>
    <property type="match status" value="1"/>
</dbReference>
<dbReference type="Gene3D" id="3.30.420.10">
    <property type="entry name" value="Ribonuclease H-like superfamily/Ribonuclease H"/>
    <property type="match status" value="1"/>
</dbReference>
<dbReference type="HAMAP" id="MF_00034">
    <property type="entry name" value="RuvC"/>
    <property type="match status" value="1"/>
</dbReference>
<dbReference type="InterPro" id="IPR012337">
    <property type="entry name" value="RNaseH-like_sf"/>
</dbReference>
<dbReference type="InterPro" id="IPR036397">
    <property type="entry name" value="RNaseH_sf"/>
</dbReference>
<dbReference type="InterPro" id="IPR020563">
    <property type="entry name" value="X-over_junc_endoDNase_Mg_BS"/>
</dbReference>
<dbReference type="InterPro" id="IPR002176">
    <property type="entry name" value="X-over_junc_endoDNase_RuvC"/>
</dbReference>
<dbReference type="NCBIfam" id="TIGR00228">
    <property type="entry name" value="ruvC"/>
    <property type="match status" value="1"/>
</dbReference>
<dbReference type="PANTHER" id="PTHR30194">
    <property type="entry name" value="CROSSOVER JUNCTION ENDODEOXYRIBONUCLEASE RUVC"/>
    <property type="match status" value="1"/>
</dbReference>
<dbReference type="PANTHER" id="PTHR30194:SF3">
    <property type="entry name" value="CROSSOVER JUNCTION ENDODEOXYRIBONUCLEASE RUVC"/>
    <property type="match status" value="1"/>
</dbReference>
<dbReference type="Pfam" id="PF02075">
    <property type="entry name" value="RuvC"/>
    <property type="match status" value="1"/>
</dbReference>
<dbReference type="PRINTS" id="PR00696">
    <property type="entry name" value="RSOLVASERUVC"/>
</dbReference>
<dbReference type="SUPFAM" id="SSF53098">
    <property type="entry name" value="Ribonuclease H-like"/>
    <property type="match status" value="1"/>
</dbReference>
<dbReference type="PROSITE" id="PS01321">
    <property type="entry name" value="RUVC"/>
    <property type="match status" value="1"/>
</dbReference>
<accession>A7ZGE5</accession>